<name>DAPF_GEOTN</name>
<gene>
    <name evidence="1" type="primary">dapF</name>
    <name type="ordered locus">GTNG_2907</name>
</gene>
<sequence length="290" mass="31311">MYSFLFTKMHGLGNSYIYVDLFRETLPEEDLPAIARSVADVHTGIGSDGLILICPSEQAPVKMRIFNSDGSEGKNCGNGLRCVAKYAYEHGIVRDRSFLIETLSGLVEAEVTVENGEVTSVTIDMGEPRLRRSAIPMTGPEAEQVVAESFAIDGREYEITAVSMGNPHVIFYVDDIEKAPVTTLGPVVEKDARFPEGVNVEFVEVVSERELHFRVWERGSGVTQACGTGACAAVVASVLNGKTARGVETVVHLAGGDLTITWGHDGKVRMTGPAETVCTGVYYYRGGQNG</sequence>
<keyword id="KW-0028">Amino-acid biosynthesis</keyword>
<keyword id="KW-0963">Cytoplasm</keyword>
<keyword id="KW-0413">Isomerase</keyword>
<keyword id="KW-0457">Lysine biosynthesis</keyword>
<feature type="chain" id="PRO_1000011881" description="Diaminopimelate epimerase">
    <location>
        <begin position="1"/>
        <end position="290"/>
    </location>
</feature>
<feature type="active site" description="Proton donor" evidence="1">
    <location>
        <position position="76"/>
    </location>
</feature>
<feature type="active site" description="Proton acceptor" evidence="1">
    <location>
        <position position="226"/>
    </location>
</feature>
<feature type="binding site" evidence="1">
    <location>
        <position position="14"/>
    </location>
    <ligand>
        <name>substrate</name>
    </ligand>
</feature>
<feature type="binding site" evidence="1">
    <location>
        <position position="67"/>
    </location>
    <ligand>
        <name>substrate</name>
    </ligand>
</feature>
<feature type="binding site" evidence="1">
    <location>
        <begin position="77"/>
        <end position="78"/>
    </location>
    <ligand>
        <name>substrate</name>
    </ligand>
</feature>
<feature type="binding site" evidence="1">
    <location>
        <position position="166"/>
    </location>
    <ligand>
        <name>substrate</name>
    </ligand>
</feature>
<feature type="binding site" evidence="1">
    <location>
        <position position="199"/>
    </location>
    <ligand>
        <name>substrate</name>
    </ligand>
</feature>
<feature type="binding site" evidence="1">
    <location>
        <begin position="217"/>
        <end position="218"/>
    </location>
    <ligand>
        <name>substrate</name>
    </ligand>
</feature>
<feature type="binding site" evidence="1">
    <location>
        <begin position="227"/>
        <end position="228"/>
    </location>
    <ligand>
        <name>substrate</name>
    </ligand>
</feature>
<feature type="site" description="Could be important to modulate the pK values of the two catalytic cysteine residues" evidence="1">
    <location>
        <position position="168"/>
    </location>
</feature>
<feature type="site" description="Could be important to modulate the pK values of the two catalytic cysteine residues" evidence="1">
    <location>
        <position position="217"/>
    </location>
</feature>
<comment type="function">
    <text evidence="1">Catalyzes the stereoinversion of LL-2,6-diaminopimelate (L,L-DAP) to meso-diaminopimelate (meso-DAP), a precursor of L-lysine and an essential component of the bacterial peptidoglycan.</text>
</comment>
<comment type="catalytic activity">
    <reaction evidence="1">
        <text>(2S,6S)-2,6-diaminopimelate = meso-2,6-diaminopimelate</text>
        <dbReference type="Rhea" id="RHEA:15393"/>
        <dbReference type="ChEBI" id="CHEBI:57609"/>
        <dbReference type="ChEBI" id="CHEBI:57791"/>
        <dbReference type="EC" id="5.1.1.7"/>
    </reaction>
</comment>
<comment type="pathway">
    <text evidence="1">Amino-acid biosynthesis; L-lysine biosynthesis via DAP pathway; DL-2,6-diaminopimelate from LL-2,6-diaminopimelate: step 1/1.</text>
</comment>
<comment type="subunit">
    <text evidence="1">Homodimer.</text>
</comment>
<comment type="subcellular location">
    <subcellularLocation>
        <location evidence="1">Cytoplasm</location>
    </subcellularLocation>
</comment>
<comment type="similarity">
    <text evidence="1">Belongs to the diaminopimelate epimerase family.</text>
</comment>
<reference key="1">
    <citation type="journal article" date="2007" name="Proc. Natl. Acad. Sci. U.S.A.">
        <title>Genome and proteome of long-chain alkane degrading Geobacillus thermodenitrificans NG80-2 isolated from a deep-subsurface oil reservoir.</title>
        <authorList>
            <person name="Feng L."/>
            <person name="Wang W."/>
            <person name="Cheng J."/>
            <person name="Ren Y."/>
            <person name="Zhao G."/>
            <person name="Gao C."/>
            <person name="Tang Y."/>
            <person name="Liu X."/>
            <person name="Han W."/>
            <person name="Peng X."/>
            <person name="Liu R."/>
            <person name="Wang L."/>
        </authorList>
    </citation>
    <scope>NUCLEOTIDE SEQUENCE [LARGE SCALE GENOMIC DNA]</scope>
    <source>
        <strain>NG80-2</strain>
    </source>
</reference>
<accession>A4ISE8</accession>
<dbReference type="EC" id="5.1.1.7" evidence="1"/>
<dbReference type="EMBL" id="CP000557">
    <property type="protein sequence ID" value="ABO68252.1"/>
    <property type="molecule type" value="Genomic_DNA"/>
</dbReference>
<dbReference type="RefSeq" id="WP_008881827.1">
    <property type="nucleotide sequence ID" value="NC_009328.1"/>
</dbReference>
<dbReference type="SMR" id="A4ISE8"/>
<dbReference type="KEGG" id="gtn:GTNG_2907"/>
<dbReference type="eggNOG" id="COG0253">
    <property type="taxonomic scope" value="Bacteria"/>
</dbReference>
<dbReference type="HOGENOM" id="CLU_053306_3_0_9"/>
<dbReference type="UniPathway" id="UPA00034">
    <property type="reaction ID" value="UER00025"/>
</dbReference>
<dbReference type="Proteomes" id="UP000001578">
    <property type="component" value="Chromosome"/>
</dbReference>
<dbReference type="GO" id="GO:0005829">
    <property type="term" value="C:cytosol"/>
    <property type="evidence" value="ECO:0007669"/>
    <property type="project" value="TreeGrafter"/>
</dbReference>
<dbReference type="GO" id="GO:0008837">
    <property type="term" value="F:diaminopimelate epimerase activity"/>
    <property type="evidence" value="ECO:0007669"/>
    <property type="project" value="UniProtKB-UniRule"/>
</dbReference>
<dbReference type="GO" id="GO:0009089">
    <property type="term" value="P:lysine biosynthetic process via diaminopimelate"/>
    <property type="evidence" value="ECO:0007669"/>
    <property type="project" value="UniProtKB-UniRule"/>
</dbReference>
<dbReference type="FunFam" id="3.10.310.10:FF:000004">
    <property type="entry name" value="Diaminopimelate epimerase"/>
    <property type="match status" value="1"/>
</dbReference>
<dbReference type="FunFam" id="3.10.310.10:FF:000006">
    <property type="entry name" value="Diaminopimelate epimerase"/>
    <property type="match status" value="1"/>
</dbReference>
<dbReference type="Gene3D" id="3.10.310.10">
    <property type="entry name" value="Diaminopimelate Epimerase, Chain A, domain 1"/>
    <property type="match status" value="2"/>
</dbReference>
<dbReference type="HAMAP" id="MF_00197">
    <property type="entry name" value="DAP_epimerase"/>
    <property type="match status" value="1"/>
</dbReference>
<dbReference type="InterPro" id="IPR018510">
    <property type="entry name" value="DAP_epimerase_AS"/>
</dbReference>
<dbReference type="InterPro" id="IPR001653">
    <property type="entry name" value="DAP_epimerase_DapF"/>
</dbReference>
<dbReference type="NCBIfam" id="TIGR00652">
    <property type="entry name" value="DapF"/>
    <property type="match status" value="1"/>
</dbReference>
<dbReference type="PANTHER" id="PTHR31689:SF0">
    <property type="entry name" value="DIAMINOPIMELATE EPIMERASE"/>
    <property type="match status" value="1"/>
</dbReference>
<dbReference type="PANTHER" id="PTHR31689">
    <property type="entry name" value="DIAMINOPIMELATE EPIMERASE, CHLOROPLASTIC"/>
    <property type="match status" value="1"/>
</dbReference>
<dbReference type="Pfam" id="PF01678">
    <property type="entry name" value="DAP_epimerase"/>
    <property type="match status" value="2"/>
</dbReference>
<dbReference type="SUPFAM" id="SSF54506">
    <property type="entry name" value="Diaminopimelate epimerase-like"/>
    <property type="match status" value="1"/>
</dbReference>
<dbReference type="PROSITE" id="PS01326">
    <property type="entry name" value="DAP_EPIMERASE"/>
    <property type="match status" value="1"/>
</dbReference>
<evidence type="ECO:0000255" key="1">
    <source>
        <dbReference type="HAMAP-Rule" id="MF_00197"/>
    </source>
</evidence>
<organism>
    <name type="scientific">Geobacillus thermodenitrificans (strain NG80-2)</name>
    <dbReference type="NCBI Taxonomy" id="420246"/>
    <lineage>
        <taxon>Bacteria</taxon>
        <taxon>Bacillati</taxon>
        <taxon>Bacillota</taxon>
        <taxon>Bacilli</taxon>
        <taxon>Bacillales</taxon>
        <taxon>Anoxybacillaceae</taxon>
        <taxon>Geobacillus</taxon>
    </lineage>
</organism>
<protein>
    <recommendedName>
        <fullName evidence="1">Diaminopimelate epimerase</fullName>
        <shortName evidence="1">DAP epimerase</shortName>
        <ecNumber evidence="1">5.1.1.7</ecNumber>
    </recommendedName>
    <alternativeName>
        <fullName evidence="1">PLP-independent amino acid racemase</fullName>
    </alternativeName>
</protein>
<proteinExistence type="inferred from homology"/>